<feature type="chain" id="PRO_0000296526" description="Large ribosomal subunit protein bL32">
    <location>
        <begin position="1"/>
        <end position="56"/>
    </location>
</feature>
<gene>
    <name evidence="1" type="primary">rpmF</name>
    <name evidence="1" type="synonym">rpl32</name>
    <name type="ordered locus">A9601_10161</name>
</gene>
<name>RL32_PROMS</name>
<reference key="1">
    <citation type="journal article" date="2007" name="PLoS Genet.">
        <title>Patterns and implications of gene gain and loss in the evolution of Prochlorococcus.</title>
        <authorList>
            <person name="Kettler G.C."/>
            <person name="Martiny A.C."/>
            <person name="Huang K."/>
            <person name="Zucker J."/>
            <person name="Coleman M.L."/>
            <person name="Rodrigue S."/>
            <person name="Chen F."/>
            <person name="Lapidus A."/>
            <person name="Ferriera S."/>
            <person name="Johnson J."/>
            <person name="Steglich C."/>
            <person name="Church G.M."/>
            <person name="Richardson P."/>
            <person name="Chisholm S.W."/>
        </authorList>
    </citation>
    <scope>NUCLEOTIDE SEQUENCE [LARGE SCALE GENOMIC DNA]</scope>
    <source>
        <strain>AS9601</strain>
    </source>
</reference>
<proteinExistence type="inferred from homology"/>
<comment type="similarity">
    <text evidence="1">Belongs to the bacterial ribosomal protein bL32 family.</text>
</comment>
<dbReference type="EMBL" id="CP000551">
    <property type="protein sequence ID" value="ABM70300.1"/>
    <property type="molecule type" value="Genomic_DNA"/>
</dbReference>
<dbReference type="RefSeq" id="WP_002805281.1">
    <property type="nucleotide sequence ID" value="NC_008816.1"/>
</dbReference>
<dbReference type="SMR" id="A2BR89"/>
<dbReference type="STRING" id="146891.A9601_10161"/>
<dbReference type="KEGG" id="pmb:A9601_10161"/>
<dbReference type="eggNOG" id="COG0333">
    <property type="taxonomic scope" value="Bacteria"/>
</dbReference>
<dbReference type="HOGENOM" id="CLU_199882_0_0_3"/>
<dbReference type="Proteomes" id="UP000002590">
    <property type="component" value="Chromosome"/>
</dbReference>
<dbReference type="GO" id="GO:0015934">
    <property type="term" value="C:large ribosomal subunit"/>
    <property type="evidence" value="ECO:0007669"/>
    <property type="project" value="InterPro"/>
</dbReference>
<dbReference type="GO" id="GO:0003735">
    <property type="term" value="F:structural constituent of ribosome"/>
    <property type="evidence" value="ECO:0007669"/>
    <property type="project" value="InterPro"/>
</dbReference>
<dbReference type="GO" id="GO:0006412">
    <property type="term" value="P:translation"/>
    <property type="evidence" value="ECO:0007669"/>
    <property type="project" value="UniProtKB-UniRule"/>
</dbReference>
<dbReference type="HAMAP" id="MF_00340">
    <property type="entry name" value="Ribosomal_bL32"/>
    <property type="match status" value="1"/>
</dbReference>
<dbReference type="InterPro" id="IPR002677">
    <property type="entry name" value="Ribosomal_bL32"/>
</dbReference>
<dbReference type="InterPro" id="IPR044958">
    <property type="entry name" value="Ribosomal_bL32_plant/cyanobact"/>
</dbReference>
<dbReference type="InterPro" id="IPR011332">
    <property type="entry name" value="Ribosomal_zn-bd"/>
</dbReference>
<dbReference type="NCBIfam" id="TIGR01031">
    <property type="entry name" value="rpmF_bact"/>
    <property type="match status" value="1"/>
</dbReference>
<dbReference type="PANTHER" id="PTHR36083">
    <property type="entry name" value="50S RIBOSOMAL PROTEIN L32, CHLOROPLASTIC"/>
    <property type="match status" value="1"/>
</dbReference>
<dbReference type="PANTHER" id="PTHR36083:SF1">
    <property type="entry name" value="LARGE RIBOSOMAL SUBUNIT PROTEIN BL32C"/>
    <property type="match status" value="1"/>
</dbReference>
<dbReference type="Pfam" id="PF01783">
    <property type="entry name" value="Ribosomal_L32p"/>
    <property type="match status" value="1"/>
</dbReference>
<dbReference type="SUPFAM" id="SSF57829">
    <property type="entry name" value="Zn-binding ribosomal proteins"/>
    <property type="match status" value="1"/>
</dbReference>
<evidence type="ECO:0000255" key="1">
    <source>
        <dbReference type="HAMAP-Rule" id="MF_00340"/>
    </source>
</evidence>
<evidence type="ECO:0000305" key="2"/>
<keyword id="KW-0687">Ribonucleoprotein</keyword>
<keyword id="KW-0689">Ribosomal protein</keyword>
<accession>A2BR89</accession>
<protein>
    <recommendedName>
        <fullName evidence="1">Large ribosomal subunit protein bL32</fullName>
    </recommendedName>
    <alternativeName>
        <fullName evidence="2">50S ribosomal protein L32</fullName>
    </alternativeName>
</protein>
<sequence>MAVPKKKKSKSKRNQRHAVWKGKAAIAAQKAISLGKSVLTGKAQGFVYPIEEEEEE</sequence>
<organism>
    <name type="scientific">Prochlorococcus marinus (strain AS9601)</name>
    <dbReference type="NCBI Taxonomy" id="146891"/>
    <lineage>
        <taxon>Bacteria</taxon>
        <taxon>Bacillati</taxon>
        <taxon>Cyanobacteriota</taxon>
        <taxon>Cyanophyceae</taxon>
        <taxon>Synechococcales</taxon>
        <taxon>Prochlorococcaceae</taxon>
        <taxon>Prochlorococcus</taxon>
    </lineage>
</organism>